<keyword id="KW-0963">Cytoplasm</keyword>
<keyword id="KW-0489">Methyltransferase</keyword>
<keyword id="KW-0698">rRNA processing</keyword>
<keyword id="KW-0949">S-adenosyl-L-methionine</keyword>
<keyword id="KW-0808">Transferase</keyword>
<comment type="function">
    <text evidence="1">Specifically methylates the N4 position of cytidine in position 1402 (C1402) of 16S rRNA.</text>
</comment>
<comment type="catalytic activity">
    <reaction evidence="1">
        <text>cytidine(1402) in 16S rRNA + S-adenosyl-L-methionine = N(4)-methylcytidine(1402) in 16S rRNA + S-adenosyl-L-homocysteine + H(+)</text>
        <dbReference type="Rhea" id="RHEA:42928"/>
        <dbReference type="Rhea" id="RHEA-COMP:10286"/>
        <dbReference type="Rhea" id="RHEA-COMP:10287"/>
        <dbReference type="ChEBI" id="CHEBI:15378"/>
        <dbReference type="ChEBI" id="CHEBI:57856"/>
        <dbReference type="ChEBI" id="CHEBI:59789"/>
        <dbReference type="ChEBI" id="CHEBI:74506"/>
        <dbReference type="ChEBI" id="CHEBI:82748"/>
        <dbReference type="EC" id="2.1.1.199"/>
    </reaction>
</comment>
<comment type="subcellular location">
    <subcellularLocation>
        <location evidence="1">Cytoplasm</location>
    </subcellularLocation>
</comment>
<comment type="similarity">
    <text evidence="1">Belongs to the methyltransferase superfamily. RsmH family.</text>
</comment>
<accession>Q6GA33</accession>
<reference key="1">
    <citation type="journal article" date="2004" name="Proc. Natl. Acad. Sci. U.S.A.">
        <title>Complete genomes of two clinical Staphylococcus aureus strains: evidence for the rapid evolution of virulence and drug resistance.</title>
        <authorList>
            <person name="Holden M.T.G."/>
            <person name="Feil E.J."/>
            <person name="Lindsay J.A."/>
            <person name="Peacock S.J."/>
            <person name="Day N.P.J."/>
            <person name="Enright M.C."/>
            <person name="Foster T.J."/>
            <person name="Moore C.E."/>
            <person name="Hurst L."/>
            <person name="Atkin R."/>
            <person name="Barron A."/>
            <person name="Bason N."/>
            <person name="Bentley S.D."/>
            <person name="Chillingworth C."/>
            <person name="Chillingworth T."/>
            <person name="Churcher C."/>
            <person name="Clark L."/>
            <person name="Corton C."/>
            <person name="Cronin A."/>
            <person name="Doggett J."/>
            <person name="Dowd L."/>
            <person name="Feltwell T."/>
            <person name="Hance Z."/>
            <person name="Harris B."/>
            <person name="Hauser H."/>
            <person name="Holroyd S."/>
            <person name="Jagels K."/>
            <person name="James K.D."/>
            <person name="Lennard N."/>
            <person name="Line A."/>
            <person name="Mayes R."/>
            <person name="Moule S."/>
            <person name="Mungall K."/>
            <person name="Ormond D."/>
            <person name="Quail M.A."/>
            <person name="Rabbinowitsch E."/>
            <person name="Rutherford K.M."/>
            <person name="Sanders M."/>
            <person name="Sharp S."/>
            <person name="Simmonds M."/>
            <person name="Stevens K."/>
            <person name="Whitehead S."/>
            <person name="Barrell B.G."/>
            <person name="Spratt B.G."/>
            <person name="Parkhill J."/>
        </authorList>
    </citation>
    <scope>NUCLEOTIDE SEQUENCE [LARGE SCALE GENOMIC DNA]</scope>
    <source>
        <strain>MSSA476</strain>
    </source>
</reference>
<gene>
    <name evidence="1" type="primary">rsmH</name>
    <name type="synonym">mraW</name>
    <name type="ordered locus">SAS1113</name>
</gene>
<dbReference type="EC" id="2.1.1.199" evidence="1"/>
<dbReference type="EMBL" id="BX571857">
    <property type="protein sequence ID" value="CAG42890.1"/>
    <property type="molecule type" value="Genomic_DNA"/>
</dbReference>
<dbReference type="RefSeq" id="WP_000468384.1">
    <property type="nucleotide sequence ID" value="NC_002953.3"/>
</dbReference>
<dbReference type="SMR" id="Q6GA33"/>
<dbReference type="KEGG" id="sas:SAS1113"/>
<dbReference type="HOGENOM" id="CLU_038422_2_0_9"/>
<dbReference type="GO" id="GO:0005737">
    <property type="term" value="C:cytoplasm"/>
    <property type="evidence" value="ECO:0007669"/>
    <property type="project" value="UniProtKB-SubCell"/>
</dbReference>
<dbReference type="GO" id="GO:0071424">
    <property type="term" value="F:rRNA (cytosine-N4-)-methyltransferase activity"/>
    <property type="evidence" value="ECO:0007669"/>
    <property type="project" value="UniProtKB-UniRule"/>
</dbReference>
<dbReference type="GO" id="GO:0070475">
    <property type="term" value="P:rRNA base methylation"/>
    <property type="evidence" value="ECO:0007669"/>
    <property type="project" value="UniProtKB-UniRule"/>
</dbReference>
<dbReference type="FunFam" id="1.10.150.170:FF:000001">
    <property type="entry name" value="Ribosomal RNA small subunit methyltransferase H"/>
    <property type="match status" value="1"/>
</dbReference>
<dbReference type="Gene3D" id="1.10.150.170">
    <property type="entry name" value="Putative methyltransferase TM0872, insert domain"/>
    <property type="match status" value="1"/>
</dbReference>
<dbReference type="Gene3D" id="3.40.50.150">
    <property type="entry name" value="Vaccinia Virus protein VP39"/>
    <property type="match status" value="1"/>
</dbReference>
<dbReference type="HAMAP" id="MF_01007">
    <property type="entry name" value="16SrRNA_methyltr_H"/>
    <property type="match status" value="1"/>
</dbReference>
<dbReference type="InterPro" id="IPR002903">
    <property type="entry name" value="RsmH"/>
</dbReference>
<dbReference type="InterPro" id="IPR023397">
    <property type="entry name" value="SAM-dep_MeTrfase_MraW_recog"/>
</dbReference>
<dbReference type="InterPro" id="IPR029063">
    <property type="entry name" value="SAM-dependent_MTases_sf"/>
</dbReference>
<dbReference type="NCBIfam" id="TIGR00006">
    <property type="entry name" value="16S rRNA (cytosine(1402)-N(4))-methyltransferase RsmH"/>
    <property type="match status" value="1"/>
</dbReference>
<dbReference type="PANTHER" id="PTHR11265:SF0">
    <property type="entry name" value="12S RRNA N4-METHYLCYTIDINE METHYLTRANSFERASE"/>
    <property type="match status" value="1"/>
</dbReference>
<dbReference type="PANTHER" id="PTHR11265">
    <property type="entry name" value="S-ADENOSYL-METHYLTRANSFERASE MRAW"/>
    <property type="match status" value="1"/>
</dbReference>
<dbReference type="Pfam" id="PF01795">
    <property type="entry name" value="Methyltransf_5"/>
    <property type="match status" value="1"/>
</dbReference>
<dbReference type="PIRSF" id="PIRSF004486">
    <property type="entry name" value="MraW"/>
    <property type="match status" value="1"/>
</dbReference>
<dbReference type="SUPFAM" id="SSF81799">
    <property type="entry name" value="Putative methyltransferase TM0872, insert domain"/>
    <property type="match status" value="1"/>
</dbReference>
<dbReference type="SUPFAM" id="SSF53335">
    <property type="entry name" value="S-adenosyl-L-methionine-dependent methyltransferases"/>
    <property type="match status" value="1"/>
</dbReference>
<proteinExistence type="inferred from homology"/>
<feature type="chain" id="PRO_0000108709" description="Ribosomal RNA small subunit methyltransferase H">
    <location>
        <begin position="1"/>
        <end position="311"/>
    </location>
</feature>
<feature type="binding site" evidence="1">
    <location>
        <begin position="32"/>
        <end position="34"/>
    </location>
    <ligand>
        <name>S-adenosyl-L-methionine</name>
        <dbReference type="ChEBI" id="CHEBI:59789"/>
    </ligand>
</feature>
<feature type="binding site" evidence="1">
    <location>
        <position position="52"/>
    </location>
    <ligand>
        <name>S-adenosyl-L-methionine</name>
        <dbReference type="ChEBI" id="CHEBI:59789"/>
    </ligand>
</feature>
<feature type="binding site" evidence="1">
    <location>
        <position position="79"/>
    </location>
    <ligand>
        <name>S-adenosyl-L-methionine</name>
        <dbReference type="ChEBI" id="CHEBI:59789"/>
    </ligand>
</feature>
<feature type="binding site" evidence="1">
    <location>
        <position position="100"/>
    </location>
    <ligand>
        <name>S-adenosyl-L-methionine</name>
        <dbReference type="ChEBI" id="CHEBI:59789"/>
    </ligand>
</feature>
<feature type="binding site" evidence="1">
    <location>
        <position position="107"/>
    </location>
    <ligand>
        <name>S-adenosyl-L-methionine</name>
        <dbReference type="ChEBI" id="CHEBI:59789"/>
    </ligand>
</feature>
<name>RSMH_STAAS</name>
<protein>
    <recommendedName>
        <fullName evidence="1">Ribosomal RNA small subunit methyltransferase H</fullName>
        <ecNumber evidence="1">2.1.1.199</ecNumber>
    </recommendedName>
    <alternativeName>
        <fullName evidence="1">16S rRNA m(4)C1402 methyltransferase</fullName>
    </alternativeName>
    <alternativeName>
        <fullName evidence="1">rRNA (cytosine-N(4)-)-methyltransferase RsmH</fullName>
    </alternativeName>
</protein>
<sequence>MFHHISVMLNETIDYLNVKENGVYIDCTLGGAGHALYLLNQLNDDGRLIAIDQDQTAIDNAKEVLKDHLHKVTFVHSNFRELTQILKDLNIEKVDGIYYDLGVSSPQLDIPERGFSYHHDATLDMRMDQTQELTAYEIVNNWSYEALVKIFYRYGEEKFSKQIARRIEAHREQQPITTTLELVDIIKEGIPAKARRKGGHPAKRVFQALRIAVNDELSAFEDSIEQAIELVKVDGRISVITFHSLEDRLCKQVFQEYEKGPEVPRGLPVIPEAYTPKLKRVNRKPITATEEDLDDNNRARSAKLRVAEILK</sequence>
<organism>
    <name type="scientific">Staphylococcus aureus (strain MSSA476)</name>
    <dbReference type="NCBI Taxonomy" id="282459"/>
    <lineage>
        <taxon>Bacteria</taxon>
        <taxon>Bacillati</taxon>
        <taxon>Bacillota</taxon>
        <taxon>Bacilli</taxon>
        <taxon>Bacillales</taxon>
        <taxon>Staphylococcaceae</taxon>
        <taxon>Staphylococcus</taxon>
    </lineage>
</organism>
<evidence type="ECO:0000255" key="1">
    <source>
        <dbReference type="HAMAP-Rule" id="MF_01007"/>
    </source>
</evidence>